<reference key="1">
    <citation type="journal article" date="1993" name="J. Mol. Evol.">
        <title>The nucleotide sequence of the mitochondrial DNA molecule of the grey seal, Halichoerus grypus, and a comparison with mitochondrial sequences of other true seals.</title>
        <authorList>
            <person name="Arnason U."/>
            <person name="Gullberg A."/>
            <person name="Johnsson E."/>
            <person name="Ledje C."/>
        </authorList>
    </citation>
    <scope>NUCLEOTIDE SEQUENCE [GENOMIC DNA]</scope>
</reference>
<reference key="2">
    <citation type="journal article" date="1995" name="J. Mammal.">
        <title>A phylogenetic perspective on the evolution of reproductive behavior in pagophilic seals of the Northwest Atlantic as indicated by mitochondrial DNA sequences.</title>
        <authorList>
            <person name="Perry E.A."/>
            <person name="Carr S.M."/>
            <person name="Bartlett S.E."/>
            <person name="Davidson W.S."/>
        </authorList>
    </citation>
    <scope>NUCLEOTIDE SEQUENCE [GENOMIC DNA] OF 1-134</scope>
    <source>
        <tissue>Muscle</tissue>
    </source>
</reference>
<organism>
    <name type="scientific">Halichoerus grypus</name>
    <name type="common">Gray seal</name>
    <name type="synonym">Phoca grypus</name>
    <dbReference type="NCBI Taxonomy" id="9711"/>
    <lineage>
        <taxon>Eukaryota</taxon>
        <taxon>Metazoa</taxon>
        <taxon>Chordata</taxon>
        <taxon>Craniata</taxon>
        <taxon>Vertebrata</taxon>
        <taxon>Euteleostomi</taxon>
        <taxon>Mammalia</taxon>
        <taxon>Eutheria</taxon>
        <taxon>Laurasiatheria</taxon>
        <taxon>Carnivora</taxon>
        <taxon>Caniformia</taxon>
        <taxon>Pinnipedia</taxon>
        <taxon>Phocidae</taxon>
        <taxon>Phocinae</taxon>
        <taxon>Halichoerus</taxon>
    </lineage>
</organism>
<proteinExistence type="inferred from homology"/>
<accession>P38593</accession>
<gene>
    <name type="primary">MT-CYB</name>
    <name type="synonym">COB</name>
    <name type="synonym">CYTB</name>
    <name type="synonym">MTCYB</name>
</gene>
<evidence type="ECO:0000250" key="1"/>
<evidence type="ECO:0000250" key="2">
    <source>
        <dbReference type="UniProtKB" id="P00157"/>
    </source>
</evidence>
<evidence type="ECO:0000255" key="3">
    <source>
        <dbReference type="PROSITE-ProRule" id="PRU00967"/>
    </source>
</evidence>
<evidence type="ECO:0000255" key="4">
    <source>
        <dbReference type="PROSITE-ProRule" id="PRU00968"/>
    </source>
</evidence>
<keyword id="KW-0249">Electron transport</keyword>
<keyword id="KW-0349">Heme</keyword>
<keyword id="KW-0408">Iron</keyword>
<keyword id="KW-0472">Membrane</keyword>
<keyword id="KW-0479">Metal-binding</keyword>
<keyword id="KW-0496">Mitochondrion</keyword>
<keyword id="KW-0999">Mitochondrion inner membrane</keyword>
<keyword id="KW-0679">Respiratory chain</keyword>
<keyword id="KW-0812">Transmembrane</keyword>
<keyword id="KW-1133">Transmembrane helix</keyword>
<keyword id="KW-0813">Transport</keyword>
<keyword id="KW-0830">Ubiquinone</keyword>
<comment type="function">
    <text evidence="2">Component of the ubiquinol-cytochrome c reductase complex (complex III or cytochrome b-c1 complex) that is part of the mitochondrial respiratory chain. The b-c1 complex mediates electron transfer from ubiquinol to cytochrome c. Contributes to the generation of a proton gradient across the mitochondrial membrane that is then used for ATP synthesis.</text>
</comment>
<comment type="cofactor">
    <cofactor evidence="2">
        <name>heme b</name>
        <dbReference type="ChEBI" id="CHEBI:60344"/>
    </cofactor>
    <text evidence="2">Binds 2 heme b groups non-covalently.</text>
</comment>
<comment type="subunit">
    <text evidence="2">The cytochrome bc1 complex contains 11 subunits: 3 respiratory subunits (MT-CYB, CYC1 and UQCRFS1), 2 core proteins (UQCRC1 and UQCRC2) and 6 low-molecular weight proteins (UQCRH/QCR6, UQCRB/QCR7, UQCRQ/QCR8, UQCR10/QCR9, UQCR11/QCR10 and a cleavage product of UQCRFS1). This cytochrome bc1 complex then forms a dimer.</text>
</comment>
<comment type="subcellular location">
    <subcellularLocation>
        <location evidence="2">Mitochondrion inner membrane</location>
        <topology evidence="2">Multi-pass membrane protein</topology>
    </subcellularLocation>
</comment>
<comment type="miscellaneous">
    <text evidence="1">Heme 1 (or BL or b562) is low-potential and absorbs at about 562 nm, and heme 2 (or BH or b566) is high-potential and absorbs at about 566 nm.</text>
</comment>
<comment type="similarity">
    <text evidence="3 4">Belongs to the cytochrome b family.</text>
</comment>
<comment type="caution">
    <text evidence="2">The full-length protein contains only eight transmembrane helices, not nine as predicted by bioinformatics tools.</text>
</comment>
<name>CYB_HALGR</name>
<feature type="chain" id="PRO_0000061021" description="Cytochrome b">
    <location>
        <begin position="1"/>
        <end position="379"/>
    </location>
</feature>
<feature type="transmembrane region" description="Helical" evidence="2">
    <location>
        <begin position="33"/>
        <end position="53"/>
    </location>
</feature>
<feature type="transmembrane region" description="Helical" evidence="2">
    <location>
        <begin position="77"/>
        <end position="98"/>
    </location>
</feature>
<feature type="transmembrane region" description="Helical" evidence="2">
    <location>
        <begin position="113"/>
        <end position="133"/>
    </location>
</feature>
<feature type="transmembrane region" description="Helical" evidence="2">
    <location>
        <begin position="178"/>
        <end position="198"/>
    </location>
</feature>
<feature type="transmembrane region" description="Helical" evidence="2">
    <location>
        <begin position="226"/>
        <end position="246"/>
    </location>
</feature>
<feature type="transmembrane region" description="Helical" evidence="2">
    <location>
        <begin position="288"/>
        <end position="308"/>
    </location>
</feature>
<feature type="transmembrane region" description="Helical" evidence="2">
    <location>
        <begin position="320"/>
        <end position="340"/>
    </location>
</feature>
<feature type="transmembrane region" description="Helical" evidence="2">
    <location>
        <begin position="347"/>
        <end position="367"/>
    </location>
</feature>
<feature type="binding site" description="axial binding residue" evidence="2">
    <location>
        <position position="83"/>
    </location>
    <ligand>
        <name>heme b</name>
        <dbReference type="ChEBI" id="CHEBI:60344"/>
        <label>b562</label>
    </ligand>
    <ligandPart>
        <name>Fe</name>
        <dbReference type="ChEBI" id="CHEBI:18248"/>
    </ligandPart>
</feature>
<feature type="binding site" description="axial binding residue" evidence="2">
    <location>
        <position position="97"/>
    </location>
    <ligand>
        <name>heme b</name>
        <dbReference type="ChEBI" id="CHEBI:60344"/>
        <label>b566</label>
    </ligand>
    <ligandPart>
        <name>Fe</name>
        <dbReference type="ChEBI" id="CHEBI:18248"/>
    </ligandPart>
</feature>
<feature type="binding site" description="axial binding residue" evidence="2">
    <location>
        <position position="182"/>
    </location>
    <ligand>
        <name>heme b</name>
        <dbReference type="ChEBI" id="CHEBI:60344"/>
        <label>b562</label>
    </ligand>
    <ligandPart>
        <name>Fe</name>
        <dbReference type="ChEBI" id="CHEBI:18248"/>
    </ligandPart>
</feature>
<feature type="binding site" description="axial binding residue" evidence="2">
    <location>
        <position position="196"/>
    </location>
    <ligand>
        <name>heme b</name>
        <dbReference type="ChEBI" id="CHEBI:60344"/>
        <label>b566</label>
    </ligand>
    <ligandPart>
        <name>Fe</name>
        <dbReference type="ChEBI" id="CHEBI:18248"/>
    </ligandPart>
</feature>
<feature type="binding site" evidence="2">
    <location>
        <position position="201"/>
    </location>
    <ligand>
        <name>a ubiquinone</name>
        <dbReference type="ChEBI" id="CHEBI:16389"/>
    </ligand>
</feature>
<geneLocation type="mitochondrion"/>
<protein>
    <recommendedName>
        <fullName>Cytochrome b</fullName>
    </recommendedName>
    <alternativeName>
        <fullName>Complex III subunit 3</fullName>
    </alternativeName>
    <alternativeName>
        <fullName>Complex III subunit III</fullName>
    </alternativeName>
    <alternativeName>
        <fullName>Cytochrome b-c1 complex subunit 3</fullName>
    </alternativeName>
    <alternativeName>
        <fullName>Ubiquinol-cytochrome-c reductase complex cytochrome b subunit</fullName>
    </alternativeName>
</protein>
<dbReference type="EMBL" id="X72004">
    <property type="protein sequence ID" value="CAA50889.1"/>
    <property type="molecule type" value="Genomic_DNA"/>
</dbReference>
<dbReference type="EMBL" id="L39208">
    <property type="protein sequence ID" value="AAC28870.1"/>
    <property type="molecule type" value="Genomic_DNA"/>
</dbReference>
<dbReference type="PIR" id="S41847">
    <property type="entry name" value="S41847"/>
</dbReference>
<dbReference type="RefSeq" id="NP_007081.1">
    <property type="nucleotide sequence ID" value="NC_001602.1"/>
</dbReference>
<dbReference type="SMR" id="P38593"/>
<dbReference type="GeneID" id="807747"/>
<dbReference type="CTD" id="4519"/>
<dbReference type="GO" id="GO:0005743">
    <property type="term" value="C:mitochondrial inner membrane"/>
    <property type="evidence" value="ECO:0007669"/>
    <property type="project" value="UniProtKB-SubCell"/>
</dbReference>
<dbReference type="GO" id="GO:0045275">
    <property type="term" value="C:respiratory chain complex III"/>
    <property type="evidence" value="ECO:0007669"/>
    <property type="project" value="InterPro"/>
</dbReference>
<dbReference type="GO" id="GO:0046872">
    <property type="term" value="F:metal ion binding"/>
    <property type="evidence" value="ECO:0007669"/>
    <property type="project" value="UniProtKB-KW"/>
</dbReference>
<dbReference type="GO" id="GO:0008121">
    <property type="term" value="F:ubiquinol-cytochrome-c reductase activity"/>
    <property type="evidence" value="ECO:0007669"/>
    <property type="project" value="InterPro"/>
</dbReference>
<dbReference type="GO" id="GO:0006122">
    <property type="term" value="P:mitochondrial electron transport, ubiquinol to cytochrome c"/>
    <property type="evidence" value="ECO:0007669"/>
    <property type="project" value="TreeGrafter"/>
</dbReference>
<dbReference type="CDD" id="cd00290">
    <property type="entry name" value="cytochrome_b_C"/>
    <property type="match status" value="1"/>
</dbReference>
<dbReference type="CDD" id="cd00284">
    <property type="entry name" value="Cytochrome_b_N"/>
    <property type="match status" value="1"/>
</dbReference>
<dbReference type="FunFam" id="1.20.810.10:FF:000002">
    <property type="entry name" value="Cytochrome b"/>
    <property type="match status" value="1"/>
</dbReference>
<dbReference type="Gene3D" id="1.20.810.10">
    <property type="entry name" value="Cytochrome Bc1 Complex, Chain C"/>
    <property type="match status" value="1"/>
</dbReference>
<dbReference type="InterPro" id="IPR005798">
    <property type="entry name" value="Cyt_b/b6_C"/>
</dbReference>
<dbReference type="InterPro" id="IPR036150">
    <property type="entry name" value="Cyt_b/b6_C_sf"/>
</dbReference>
<dbReference type="InterPro" id="IPR005797">
    <property type="entry name" value="Cyt_b/b6_N"/>
</dbReference>
<dbReference type="InterPro" id="IPR027387">
    <property type="entry name" value="Cytb/b6-like_sf"/>
</dbReference>
<dbReference type="InterPro" id="IPR030689">
    <property type="entry name" value="Cytochrome_b"/>
</dbReference>
<dbReference type="InterPro" id="IPR048260">
    <property type="entry name" value="Cytochrome_b_C_euk/bac"/>
</dbReference>
<dbReference type="InterPro" id="IPR048259">
    <property type="entry name" value="Cytochrome_b_N_euk/bac"/>
</dbReference>
<dbReference type="InterPro" id="IPR016174">
    <property type="entry name" value="Di-haem_cyt_TM"/>
</dbReference>
<dbReference type="PANTHER" id="PTHR19271">
    <property type="entry name" value="CYTOCHROME B"/>
    <property type="match status" value="1"/>
</dbReference>
<dbReference type="PANTHER" id="PTHR19271:SF16">
    <property type="entry name" value="CYTOCHROME B"/>
    <property type="match status" value="1"/>
</dbReference>
<dbReference type="Pfam" id="PF00032">
    <property type="entry name" value="Cytochrom_B_C"/>
    <property type="match status" value="1"/>
</dbReference>
<dbReference type="Pfam" id="PF00033">
    <property type="entry name" value="Cytochrome_B"/>
    <property type="match status" value="1"/>
</dbReference>
<dbReference type="PIRSF" id="PIRSF038885">
    <property type="entry name" value="COB"/>
    <property type="match status" value="1"/>
</dbReference>
<dbReference type="SUPFAM" id="SSF81648">
    <property type="entry name" value="a domain/subunit of cytochrome bc1 complex (Ubiquinol-cytochrome c reductase)"/>
    <property type="match status" value="1"/>
</dbReference>
<dbReference type="SUPFAM" id="SSF81342">
    <property type="entry name" value="Transmembrane di-heme cytochromes"/>
    <property type="match status" value="1"/>
</dbReference>
<dbReference type="PROSITE" id="PS51003">
    <property type="entry name" value="CYTB_CTER"/>
    <property type="match status" value="1"/>
</dbReference>
<dbReference type="PROSITE" id="PS51002">
    <property type="entry name" value="CYTB_NTER"/>
    <property type="match status" value="1"/>
</dbReference>
<sequence>MTNIRKTHPLMKIINNSFIDLPTPSNISAWWNFGSLLGICLILQILTGLFLAMHYTSDTTTAFSSVTHICRDVNYGWIIRYLHANGASMFFICLYMHVGRGLYYGSYTFTETWNIGIILLFTIMATAFMGYVLPWGQMSFWGATVITNLLSAIPYIGTDLVQWIWGGFSVDKATLTGFFAFHFILPFVVLALAAVHLLFLHETGSNNPSGIMPDSDKIPFHPYYTIKDILGALLLILVLTLLVLFSPDLLGDPDNYIPANPLSTPPHIKPEWYFLFAYAILRSIPNKLGGVLALVLSILILAIVPLLHTSKQRGMMFRPISQCLFWLLVADLLTLTWIGGQPVEHPYITIGQLASILYFMILLVLMPIASIIENNILKW</sequence>